<feature type="chain" id="PRO_0000178145" description="dITP/XTP pyrophosphatase">
    <location>
        <begin position="1"/>
        <end position="200"/>
    </location>
</feature>
<feature type="active site" description="Proton acceptor" evidence="1">
    <location>
        <position position="73"/>
    </location>
</feature>
<feature type="binding site" evidence="1">
    <location>
        <begin position="7"/>
        <end position="12"/>
    </location>
    <ligand>
        <name>substrate</name>
    </ligand>
</feature>
<feature type="binding site" evidence="1">
    <location>
        <position position="38"/>
    </location>
    <ligand>
        <name>Mg(2+)</name>
        <dbReference type="ChEBI" id="CHEBI:18420"/>
    </ligand>
</feature>
<feature type="binding site" evidence="1">
    <location>
        <position position="73"/>
    </location>
    <ligand>
        <name>Mg(2+)</name>
        <dbReference type="ChEBI" id="CHEBI:18420"/>
    </ligand>
</feature>
<feature type="binding site" evidence="1">
    <location>
        <position position="74"/>
    </location>
    <ligand>
        <name>substrate</name>
    </ligand>
</feature>
<feature type="binding site" evidence="1">
    <location>
        <begin position="154"/>
        <end position="157"/>
    </location>
    <ligand>
        <name>substrate</name>
    </ligand>
</feature>
<feature type="binding site" evidence="1">
    <location>
        <position position="177"/>
    </location>
    <ligand>
        <name>substrate</name>
    </ligand>
</feature>
<feature type="binding site" evidence="1">
    <location>
        <begin position="182"/>
        <end position="183"/>
    </location>
    <ligand>
        <name>substrate</name>
    </ligand>
</feature>
<feature type="sequence conflict" description="In Ref. 1; AAD10059." evidence="2" ref="1">
    <original>Y</original>
    <variation>H</variation>
    <location>
        <position position="120"/>
    </location>
</feature>
<comment type="function">
    <text evidence="1">Pyrophosphatase that catalyzes the hydrolysis of nucleoside triphosphates to their monophosphate derivatives, with a high preference for the non-canonical purine nucleotides XTP (xanthosine triphosphate), dITP (deoxyinosine triphosphate) and ITP. Seems to function as a house-cleaning enzyme that removes non-canonical purine nucleotides from the nucleotide pool, thus preventing their incorporation into DNA/RNA and avoiding chromosomal lesions.</text>
</comment>
<comment type="catalytic activity">
    <reaction evidence="1">
        <text>XTP + H2O = XMP + diphosphate + H(+)</text>
        <dbReference type="Rhea" id="RHEA:28610"/>
        <dbReference type="ChEBI" id="CHEBI:15377"/>
        <dbReference type="ChEBI" id="CHEBI:15378"/>
        <dbReference type="ChEBI" id="CHEBI:33019"/>
        <dbReference type="ChEBI" id="CHEBI:57464"/>
        <dbReference type="ChEBI" id="CHEBI:61314"/>
        <dbReference type="EC" id="3.6.1.66"/>
    </reaction>
</comment>
<comment type="catalytic activity">
    <reaction evidence="1">
        <text>dITP + H2O = dIMP + diphosphate + H(+)</text>
        <dbReference type="Rhea" id="RHEA:28342"/>
        <dbReference type="ChEBI" id="CHEBI:15377"/>
        <dbReference type="ChEBI" id="CHEBI:15378"/>
        <dbReference type="ChEBI" id="CHEBI:33019"/>
        <dbReference type="ChEBI" id="CHEBI:61194"/>
        <dbReference type="ChEBI" id="CHEBI:61382"/>
        <dbReference type="EC" id="3.6.1.66"/>
    </reaction>
</comment>
<comment type="catalytic activity">
    <reaction evidence="1">
        <text>ITP + H2O = IMP + diphosphate + H(+)</text>
        <dbReference type="Rhea" id="RHEA:29399"/>
        <dbReference type="ChEBI" id="CHEBI:15377"/>
        <dbReference type="ChEBI" id="CHEBI:15378"/>
        <dbReference type="ChEBI" id="CHEBI:33019"/>
        <dbReference type="ChEBI" id="CHEBI:58053"/>
        <dbReference type="ChEBI" id="CHEBI:61402"/>
        <dbReference type="EC" id="3.6.1.66"/>
    </reaction>
</comment>
<comment type="cofactor">
    <cofactor evidence="1">
        <name>Mg(2+)</name>
        <dbReference type="ChEBI" id="CHEBI:18420"/>
    </cofactor>
    <text evidence="1">Binds 1 Mg(2+) ion per subunit.</text>
</comment>
<comment type="subunit">
    <text evidence="1">Homodimer.</text>
</comment>
<comment type="interaction">
    <interactant intactId="EBI-1271444">
        <id>Q9PMS6</id>
    </interactant>
    <interactant intactId="EBI-1271615">
        <id>Q9PN07</id>
        <label>dcd</label>
    </interactant>
    <organismsDiffer>false</organismsDiffer>
    <experiments>3</experiments>
</comment>
<comment type="similarity">
    <text evidence="1">Belongs to the HAM1 NTPase family.</text>
</comment>
<reference key="1">
    <citation type="submission" date="1998-12" db="EMBL/GenBank/DDBJ databases">
        <title>Cloning of a multidrug-efflux transporter homolog from Campylobacter jejuni.</title>
        <authorList>
            <person name="Gilbert M."/>
            <person name="Michniewicz J."/>
            <person name="Wakarchuk W.W."/>
        </authorList>
    </citation>
    <scope>NUCLEOTIDE SEQUENCE [GENOMIC DNA]</scope>
    <source>
        <strain>OH4384 / Serotype O:19</strain>
    </source>
</reference>
<reference key="2">
    <citation type="journal article" date="2000" name="Nature">
        <title>The genome sequence of the food-borne pathogen Campylobacter jejuni reveals hypervariable sequences.</title>
        <authorList>
            <person name="Parkhill J."/>
            <person name="Wren B.W."/>
            <person name="Mungall K.L."/>
            <person name="Ketley J.M."/>
            <person name="Churcher C.M."/>
            <person name="Basham D."/>
            <person name="Chillingworth T."/>
            <person name="Davies R.M."/>
            <person name="Feltwell T."/>
            <person name="Holroyd S."/>
            <person name="Jagels K."/>
            <person name="Karlyshev A.V."/>
            <person name="Moule S."/>
            <person name="Pallen M.J."/>
            <person name="Penn C.W."/>
            <person name="Quail M.A."/>
            <person name="Rajandream M.A."/>
            <person name="Rutherford K.M."/>
            <person name="van Vliet A.H.M."/>
            <person name="Whitehead S."/>
            <person name="Barrell B.G."/>
        </authorList>
    </citation>
    <scope>NUCLEOTIDE SEQUENCE [LARGE SCALE GENOMIC DNA]</scope>
    <source>
        <strain>ATCC 700819 / NCTC 11168</strain>
    </source>
</reference>
<accession>Q9PMS6</accession>
<accession>Q0P8N5</accession>
<accession>Q9ZF65</accession>
<name>IXTPA_CAMJE</name>
<dbReference type="EC" id="3.6.1.66" evidence="1"/>
<dbReference type="EMBL" id="AF113952">
    <property type="protein sequence ID" value="AAD10059.1"/>
    <property type="molecule type" value="Genomic_DNA"/>
</dbReference>
<dbReference type="EMBL" id="AL111168">
    <property type="protein sequence ID" value="CAL35486.1"/>
    <property type="molecule type" value="Genomic_DNA"/>
</dbReference>
<dbReference type="PIR" id="C81282">
    <property type="entry name" value="C81282"/>
</dbReference>
<dbReference type="RefSeq" id="YP_002344762.1">
    <property type="nucleotide sequence ID" value="NC_002163.1"/>
</dbReference>
<dbReference type="SMR" id="Q9PMS6"/>
<dbReference type="IntAct" id="Q9PMS6">
    <property type="interactions" value="41"/>
</dbReference>
<dbReference type="STRING" id="192222.Cj1374c"/>
<dbReference type="PaxDb" id="192222-Cj1374c"/>
<dbReference type="EnsemblBacteria" id="CAL35486">
    <property type="protein sequence ID" value="CAL35486"/>
    <property type="gene ID" value="Cj1374c"/>
</dbReference>
<dbReference type="GeneID" id="905667"/>
<dbReference type="KEGG" id="cje:Cj1374c"/>
<dbReference type="PATRIC" id="fig|192222.6.peg.1355"/>
<dbReference type="eggNOG" id="COG0127">
    <property type="taxonomic scope" value="Bacteria"/>
</dbReference>
<dbReference type="HOGENOM" id="CLU_082080_0_2_7"/>
<dbReference type="OrthoDB" id="9807456at2"/>
<dbReference type="Proteomes" id="UP000000799">
    <property type="component" value="Chromosome"/>
</dbReference>
<dbReference type="GO" id="GO:0005829">
    <property type="term" value="C:cytosol"/>
    <property type="evidence" value="ECO:0007669"/>
    <property type="project" value="TreeGrafter"/>
</dbReference>
<dbReference type="GO" id="GO:0035870">
    <property type="term" value="F:dITP diphosphatase activity"/>
    <property type="evidence" value="ECO:0007669"/>
    <property type="project" value="RHEA"/>
</dbReference>
<dbReference type="GO" id="GO:0036220">
    <property type="term" value="F:ITP diphosphatase activity"/>
    <property type="evidence" value="ECO:0007669"/>
    <property type="project" value="UniProtKB-EC"/>
</dbReference>
<dbReference type="GO" id="GO:0046872">
    <property type="term" value="F:metal ion binding"/>
    <property type="evidence" value="ECO:0007669"/>
    <property type="project" value="UniProtKB-KW"/>
</dbReference>
<dbReference type="GO" id="GO:0000166">
    <property type="term" value="F:nucleotide binding"/>
    <property type="evidence" value="ECO:0007669"/>
    <property type="project" value="UniProtKB-KW"/>
</dbReference>
<dbReference type="GO" id="GO:0017111">
    <property type="term" value="F:ribonucleoside triphosphate phosphatase activity"/>
    <property type="evidence" value="ECO:0007669"/>
    <property type="project" value="InterPro"/>
</dbReference>
<dbReference type="GO" id="GO:0036222">
    <property type="term" value="F:XTP diphosphatase activity"/>
    <property type="evidence" value="ECO:0007669"/>
    <property type="project" value="RHEA"/>
</dbReference>
<dbReference type="GO" id="GO:0009117">
    <property type="term" value="P:nucleotide metabolic process"/>
    <property type="evidence" value="ECO:0007669"/>
    <property type="project" value="UniProtKB-KW"/>
</dbReference>
<dbReference type="GO" id="GO:0009146">
    <property type="term" value="P:purine nucleoside triphosphate catabolic process"/>
    <property type="evidence" value="ECO:0007669"/>
    <property type="project" value="UniProtKB-UniRule"/>
</dbReference>
<dbReference type="CDD" id="cd00515">
    <property type="entry name" value="HAM1"/>
    <property type="match status" value="1"/>
</dbReference>
<dbReference type="FunFam" id="3.90.950.10:FF:000001">
    <property type="entry name" value="dITP/XTP pyrophosphatase"/>
    <property type="match status" value="1"/>
</dbReference>
<dbReference type="Gene3D" id="3.90.950.10">
    <property type="match status" value="1"/>
</dbReference>
<dbReference type="HAMAP" id="MF_01405">
    <property type="entry name" value="Non_canon_purine_NTPase"/>
    <property type="match status" value="1"/>
</dbReference>
<dbReference type="InterPro" id="IPR020922">
    <property type="entry name" value="dITP/XTP_pyrophosphatase"/>
</dbReference>
<dbReference type="InterPro" id="IPR029001">
    <property type="entry name" value="ITPase-like_fam"/>
</dbReference>
<dbReference type="InterPro" id="IPR002637">
    <property type="entry name" value="RdgB/HAM1"/>
</dbReference>
<dbReference type="NCBIfam" id="TIGR00042">
    <property type="entry name" value="RdgB/HAM1 family non-canonical purine NTP pyrophosphatase"/>
    <property type="match status" value="1"/>
</dbReference>
<dbReference type="PANTHER" id="PTHR11067:SF9">
    <property type="entry name" value="INOSINE TRIPHOSPHATE PYROPHOSPHATASE"/>
    <property type="match status" value="1"/>
</dbReference>
<dbReference type="PANTHER" id="PTHR11067">
    <property type="entry name" value="INOSINE TRIPHOSPHATE PYROPHOSPHATASE/HAM1 PROTEIN"/>
    <property type="match status" value="1"/>
</dbReference>
<dbReference type="Pfam" id="PF01725">
    <property type="entry name" value="Ham1p_like"/>
    <property type="match status" value="1"/>
</dbReference>
<dbReference type="SUPFAM" id="SSF52972">
    <property type="entry name" value="ITPase-like"/>
    <property type="match status" value="1"/>
</dbReference>
<proteinExistence type="evidence at protein level"/>
<keyword id="KW-0378">Hydrolase</keyword>
<keyword id="KW-0460">Magnesium</keyword>
<keyword id="KW-0479">Metal-binding</keyword>
<keyword id="KW-0546">Nucleotide metabolism</keyword>
<keyword id="KW-0547">Nucleotide-binding</keyword>
<keyword id="KW-1185">Reference proteome</keyword>
<organism>
    <name type="scientific">Campylobacter jejuni subsp. jejuni serotype O:2 (strain ATCC 700819 / NCTC 11168)</name>
    <dbReference type="NCBI Taxonomy" id="192222"/>
    <lineage>
        <taxon>Bacteria</taxon>
        <taxon>Pseudomonadati</taxon>
        <taxon>Campylobacterota</taxon>
        <taxon>Epsilonproteobacteria</taxon>
        <taxon>Campylobacterales</taxon>
        <taxon>Campylobacteraceae</taxon>
        <taxon>Campylobacter</taxon>
    </lineage>
</organism>
<evidence type="ECO:0000255" key="1">
    <source>
        <dbReference type="HAMAP-Rule" id="MF_01405"/>
    </source>
</evidence>
<evidence type="ECO:0000305" key="2"/>
<sequence>MKIILATSNKHKVLELKEILKDFEIYAFDEVLMPFEIEENGKTFKENALIKARAVFNALDEKQKKDFIALSDDSGICVDVLEGNPGIYSARFSGKGDDKSNRDKLVNEMIKKGFKQSKAYYVAAIAMVGLMGEFSTHGTMHGKVIDTEKGENGFGYDSLFIPKGFDKTLAQLSVDEKNNISHRFKALELAKIILKILNKG</sequence>
<gene>
    <name type="ordered locus">Cj1374c</name>
</gene>
<protein>
    <recommendedName>
        <fullName evidence="1">dITP/XTP pyrophosphatase</fullName>
        <ecNumber evidence="1">3.6.1.66</ecNumber>
    </recommendedName>
    <alternativeName>
        <fullName evidence="1">Non-canonical purine NTP pyrophosphatase</fullName>
    </alternativeName>
    <alternativeName>
        <fullName evidence="1">Non-standard purine NTP pyrophosphatase</fullName>
    </alternativeName>
    <alternativeName>
        <fullName evidence="1">Nucleoside-triphosphate diphosphatase</fullName>
    </alternativeName>
    <alternativeName>
        <fullName evidence="1">Nucleoside-triphosphate pyrophosphatase</fullName>
        <shortName evidence="1">NTPase</shortName>
    </alternativeName>
</protein>